<evidence type="ECO:0000250" key="1"/>
<evidence type="ECO:0000255" key="2"/>
<evidence type="ECO:0000269" key="3">
    <source>
    </source>
</evidence>
<evidence type="ECO:0000269" key="4">
    <source>
    </source>
</evidence>
<evidence type="ECO:0000269" key="5">
    <source>
    </source>
</evidence>
<evidence type="ECO:0000269" key="6">
    <source>
    </source>
</evidence>
<evidence type="ECO:0000305" key="7"/>
<evidence type="ECO:0000305" key="8">
    <source>
    </source>
</evidence>
<gene>
    <name type="primary">Phm</name>
    <name type="ORF">CG3832</name>
</gene>
<proteinExistence type="evidence at protein level"/>
<accession>O01404</accession>
<accession>O01402</accession>
<accession>O01403</accession>
<accession>O01405</accession>
<accession>O01406</accession>
<accession>O01407</accession>
<accession>O01408</accession>
<accession>Q7JNH8</accession>
<accession>Q7JNH9</accession>
<accession>Q7JNI0</accession>
<accession>Q7JNI1</accession>
<accession>Q7JNI2</accession>
<accession>Q7JNI3</accession>
<accession>Q7JNI4</accession>
<organism>
    <name type="scientific">Drosophila melanogaster</name>
    <name type="common">Fruit fly</name>
    <dbReference type="NCBI Taxonomy" id="7227"/>
    <lineage>
        <taxon>Eukaryota</taxon>
        <taxon>Metazoa</taxon>
        <taxon>Ecdysozoa</taxon>
        <taxon>Arthropoda</taxon>
        <taxon>Hexapoda</taxon>
        <taxon>Insecta</taxon>
        <taxon>Pterygota</taxon>
        <taxon>Neoptera</taxon>
        <taxon>Endopterygota</taxon>
        <taxon>Diptera</taxon>
        <taxon>Brachycera</taxon>
        <taxon>Muscomorpha</taxon>
        <taxon>Ephydroidea</taxon>
        <taxon>Drosophilidae</taxon>
        <taxon>Drosophila</taxon>
        <taxon>Sophophora</taxon>
    </lineage>
</organism>
<feature type="signal peptide" evidence="2">
    <location>
        <begin position="1"/>
        <end position="24"/>
    </location>
</feature>
<feature type="chain" id="PRO_0000248571" description="Peptidylglycine alpha-hydroxylating monooxygenase">
    <location>
        <begin position="25"/>
        <end position="365"/>
    </location>
</feature>
<feature type="binding site" evidence="1">
    <location>
        <position position="95"/>
    </location>
    <ligand>
        <name>Cu cation</name>
        <dbReference type="ChEBI" id="CHEBI:23378"/>
        <label>A</label>
    </ligand>
</feature>
<feature type="binding site" evidence="1">
    <location>
        <position position="96"/>
    </location>
    <ligand>
        <name>Cu cation</name>
        <dbReference type="ChEBI" id="CHEBI:23378"/>
        <label>A</label>
    </ligand>
</feature>
<feature type="binding site" evidence="1">
    <location>
        <position position="172"/>
    </location>
    <ligand>
        <name>Cu cation</name>
        <dbReference type="ChEBI" id="CHEBI:23378"/>
        <label>A</label>
    </ligand>
</feature>
<feature type="binding site" evidence="1">
    <location>
        <position position="241"/>
    </location>
    <ligand>
        <name>Cu cation</name>
        <dbReference type="ChEBI" id="CHEBI:23378"/>
        <label>B</label>
    </ligand>
</feature>
<feature type="binding site" evidence="1">
    <location>
        <position position="243"/>
    </location>
    <ligand>
        <name>Cu cation</name>
        <dbReference type="ChEBI" id="CHEBI:23378"/>
        <label>B</label>
    </ligand>
</feature>
<feature type="binding site" evidence="1">
    <location>
        <position position="317"/>
    </location>
    <ligand>
        <name>Cu cation</name>
        <dbReference type="ChEBI" id="CHEBI:23378"/>
        <label>B</label>
    </ligand>
</feature>
<feature type="glycosylation site" description="N-linked (GlcNAc...) asparagine" evidence="2">
    <location>
        <position position="88"/>
    </location>
</feature>
<feature type="glycosylation site" description="N-linked (GlcNAc...) asparagine" evidence="2">
    <location>
        <position position="280"/>
    </location>
</feature>
<feature type="disulfide bond" evidence="1">
    <location>
        <begin position="69"/>
        <end position="114"/>
    </location>
</feature>
<feature type="disulfide bond" evidence="1">
    <location>
        <begin position="102"/>
        <end position="129"/>
    </location>
</feature>
<feature type="disulfide bond" evidence="1">
    <location>
        <begin position="297"/>
        <end position="318"/>
    </location>
</feature>
<dbReference type="EC" id="1.14.17.3"/>
<dbReference type="EMBL" id="AF006663">
    <property type="protein sequence ID" value="AAB61676.1"/>
    <property type="molecule type" value="mRNA"/>
</dbReference>
<dbReference type="EMBL" id="U77426">
    <property type="protein sequence ID" value="AAB52566.1"/>
    <property type="molecule type" value="Genomic_DNA"/>
</dbReference>
<dbReference type="EMBL" id="U77427">
    <property type="protein sequence ID" value="AAB52567.1"/>
    <property type="molecule type" value="Genomic_DNA"/>
</dbReference>
<dbReference type="EMBL" id="U77428">
    <property type="protein sequence ID" value="AAB52568.2"/>
    <property type="molecule type" value="Genomic_DNA"/>
</dbReference>
<dbReference type="EMBL" id="U77429">
    <property type="protein sequence ID" value="AAB52569.1"/>
    <property type="molecule type" value="Genomic_DNA"/>
</dbReference>
<dbReference type="EMBL" id="U77430">
    <property type="protein sequence ID" value="AAB52570.1"/>
    <property type="molecule type" value="Genomic_DNA"/>
</dbReference>
<dbReference type="EMBL" id="U77431">
    <property type="protein sequence ID" value="AAB52571.1"/>
    <property type="molecule type" value="Genomic_DNA"/>
</dbReference>
<dbReference type="EMBL" id="U77432">
    <property type="protein sequence ID" value="AAB52572.1"/>
    <property type="molecule type" value="Genomic_DNA"/>
</dbReference>
<dbReference type="EMBL" id="AE013599">
    <property type="protein sequence ID" value="AAF47127.1"/>
    <property type="molecule type" value="Genomic_DNA"/>
</dbReference>
<dbReference type="EMBL" id="AY069103">
    <property type="protein sequence ID" value="AAL39248.1"/>
    <property type="molecule type" value="mRNA"/>
</dbReference>
<dbReference type="RefSeq" id="NP_477225.1">
    <property type="nucleotide sequence ID" value="NM_057877.4"/>
</dbReference>
<dbReference type="RefSeq" id="NP_726394.1">
    <property type="nucleotide sequence ID" value="NM_166644.2"/>
</dbReference>
<dbReference type="SMR" id="O01404"/>
<dbReference type="BioGRID" id="63409">
    <property type="interactions" value="6"/>
</dbReference>
<dbReference type="FunCoup" id="O01404">
    <property type="interactions" value="74"/>
</dbReference>
<dbReference type="IntAct" id="O01404">
    <property type="interactions" value="3"/>
</dbReference>
<dbReference type="STRING" id="7227.FBpp0072112"/>
<dbReference type="GlyCosmos" id="O01404">
    <property type="glycosylation" value="2 sites, No reported glycans"/>
</dbReference>
<dbReference type="GlyGen" id="O01404">
    <property type="glycosylation" value="3 sites"/>
</dbReference>
<dbReference type="PaxDb" id="7227-FBpp0072112"/>
<dbReference type="DNASU" id="37823"/>
<dbReference type="EnsemblMetazoa" id="FBtr0072202">
    <property type="protein sequence ID" value="FBpp0072111"/>
    <property type="gene ID" value="FBgn0283509"/>
</dbReference>
<dbReference type="EnsemblMetazoa" id="FBtr0072203">
    <property type="protein sequence ID" value="FBpp0072112"/>
    <property type="gene ID" value="FBgn0283509"/>
</dbReference>
<dbReference type="GeneID" id="37823"/>
<dbReference type="KEGG" id="dme:Dmel_CG3832"/>
<dbReference type="AGR" id="FB:FBgn0283509"/>
<dbReference type="CTD" id="37823"/>
<dbReference type="FlyBase" id="FBgn0283509">
    <property type="gene designation" value="Phm"/>
</dbReference>
<dbReference type="VEuPathDB" id="VectorBase:FBgn0283509"/>
<dbReference type="eggNOG" id="KOG3567">
    <property type="taxonomic scope" value="Eukaryota"/>
</dbReference>
<dbReference type="GeneTree" id="ENSGT00940000173843"/>
<dbReference type="HOGENOM" id="CLU_051564_0_0_1"/>
<dbReference type="InParanoid" id="O01404"/>
<dbReference type="OMA" id="PELYLCT"/>
<dbReference type="OrthoDB" id="10044505at2759"/>
<dbReference type="PhylomeDB" id="O01404"/>
<dbReference type="BRENDA" id="1.14.17.3">
    <property type="organism ID" value="1994"/>
</dbReference>
<dbReference type="BioGRID-ORCS" id="37823">
    <property type="hits" value="0 hits in 1 CRISPR screen"/>
</dbReference>
<dbReference type="ChiTaRS" id="phm">
    <property type="organism name" value="fly"/>
</dbReference>
<dbReference type="GenomeRNAi" id="37823"/>
<dbReference type="PRO" id="PR:O01404"/>
<dbReference type="Proteomes" id="UP000000803">
    <property type="component" value="Chromosome 2R"/>
</dbReference>
<dbReference type="Bgee" id="FBgn0283509">
    <property type="expression patterns" value="Expressed in adult middle midgut class I enteroendocrine cell in adult midgut (Drosophila) and 240 other cell types or tissues"/>
</dbReference>
<dbReference type="ExpressionAtlas" id="O01404">
    <property type="expression patterns" value="baseline and differential"/>
</dbReference>
<dbReference type="GO" id="GO:0005576">
    <property type="term" value="C:extracellular region"/>
    <property type="evidence" value="ECO:0000318"/>
    <property type="project" value="GO_Central"/>
</dbReference>
<dbReference type="GO" id="GO:0005615">
    <property type="term" value="C:extracellular space"/>
    <property type="evidence" value="ECO:0007005"/>
    <property type="project" value="FlyBase"/>
</dbReference>
<dbReference type="GO" id="GO:0016020">
    <property type="term" value="C:membrane"/>
    <property type="evidence" value="ECO:0007669"/>
    <property type="project" value="InterPro"/>
</dbReference>
<dbReference type="GO" id="GO:0005507">
    <property type="term" value="F:copper ion binding"/>
    <property type="evidence" value="ECO:0007669"/>
    <property type="project" value="InterPro"/>
</dbReference>
<dbReference type="GO" id="GO:0004504">
    <property type="term" value="F:peptidylglycine monooxygenase activity"/>
    <property type="evidence" value="ECO:0000314"/>
    <property type="project" value="FlyBase"/>
</dbReference>
<dbReference type="GO" id="GO:0007613">
    <property type="term" value="P:memory"/>
    <property type="evidence" value="ECO:0000315"/>
    <property type="project" value="FlyBase"/>
</dbReference>
<dbReference type="GO" id="GO:0006518">
    <property type="term" value="P:peptide metabolic process"/>
    <property type="evidence" value="ECO:0007669"/>
    <property type="project" value="InterPro"/>
</dbReference>
<dbReference type="GO" id="GO:0044719">
    <property type="term" value="P:regulation of imaginal disc-derived wing size"/>
    <property type="evidence" value="ECO:0000315"/>
    <property type="project" value="FlyBase"/>
</dbReference>
<dbReference type="GO" id="GO:0009620">
    <property type="term" value="P:response to fungus"/>
    <property type="evidence" value="ECO:0007007"/>
    <property type="project" value="FlyBase"/>
</dbReference>
<dbReference type="GO" id="GO:0019953">
    <property type="term" value="P:sexual reproduction"/>
    <property type="evidence" value="ECO:0007007"/>
    <property type="project" value="FlyBase"/>
</dbReference>
<dbReference type="FunFam" id="2.60.120.230:FF:000002">
    <property type="entry name" value="Peptidyl-glycine alpha-amidating monooxygenase B"/>
    <property type="match status" value="1"/>
</dbReference>
<dbReference type="FunFam" id="2.60.120.310:FF:000005">
    <property type="entry name" value="Peptidylglycine alpha-hydroxylating monooxygenase"/>
    <property type="match status" value="1"/>
</dbReference>
<dbReference type="Gene3D" id="2.60.120.230">
    <property type="match status" value="1"/>
</dbReference>
<dbReference type="Gene3D" id="2.60.120.310">
    <property type="entry name" value="Copper type II, ascorbate-dependent monooxygenase, N-terminal domain"/>
    <property type="match status" value="1"/>
</dbReference>
<dbReference type="InterPro" id="IPR014784">
    <property type="entry name" value="Cu2_ascorb_mOase-like_C"/>
</dbReference>
<dbReference type="InterPro" id="IPR014783">
    <property type="entry name" value="Cu2_ascorb_mOase_CS-2"/>
</dbReference>
<dbReference type="InterPro" id="IPR000323">
    <property type="entry name" value="Cu2_ascorb_mOase_N"/>
</dbReference>
<dbReference type="InterPro" id="IPR036939">
    <property type="entry name" value="Cu2_ascorb_mOase_N_sf"/>
</dbReference>
<dbReference type="InterPro" id="IPR024548">
    <property type="entry name" value="Cu2_monoox_C"/>
</dbReference>
<dbReference type="InterPro" id="IPR000720">
    <property type="entry name" value="PHM/PAL"/>
</dbReference>
<dbReference type="InterPro" id="IPR008977">
    <property type="entry name" value="PHM/PNGase_F_dom_sf"/>
</dbReference>
<dbReference type="PANTHER" id="PTHR10680">
    <property type="entry name" value="PEPTIDYL-GLYCINE ALPHA-AMIDATING MONOOXYGENASE"/>
    <property type="match status" value="1"/>
</dbReference>
<dbReference type="PANTHER" id="PTHR10680:SF14">
    <property type="entry name" value="PEPTIDYL-GLYCINE ALPHA-AMIDATING MONOOXYGENASE"/>
    <property type="match status" value="1"/>
</dbReference>
<dbReference type="Pfam" id="PF03712">
    <property type="entry name" value="Cu2_monoox_C"/>
    <property type="match status" value="1"/>
</dbReference>
<dbReference type="Pfam" id="PF01082">
    <property type="entry name" value="Cu2_monooxygen"/>
    <property type="match status" value="1"/>
</dbReference>
<dbReference type="PRINTS" id="PR00790">
    <property type="entry name" value="PAMONOXGNASE"/>
</dbReference>
<dbReference type="SUPFAM" id="SSF49742">
    <property type="entry name" value="PHM/PNGase F"/>
    <property type="match status" value="2"/>
</dbReference>
<dbReference type="PROSITE" id="PS00085">
    <property type="entry name" value="CU2_MONOOXYGENASE_2"/>
    <property type="match status" value="1"/>
</dbReference>
<sequence length="365" mass="40564">MPRISEIAASVGLLLLIGVISVDGLVKEGDYQNSLYQQNLESNSATGATASFPFLMPNVSPQTPDLYLCTPIKVDPTTTYYIVGFNPNATMNTAHHMLLYGCGEPGTSKTTWNCGEMNRASQEESASPCGPHSNSQIVYAWARDAQKLNLPEGVGFKVGKNSPIKYLVLQVHYAHIDKFKDGSTDDSGVFLDYTEEPRKKLAGTLLLGTDGQIPAMKTEHLETACEVNEQKVLHPFAYRVHTHGLGKVVSGYRVRTNSDGEQEWLQLGKRDPLTPQMFYNTSNTDPIIEGDKIAVRCTMQSTRHRTTKIGPTNEDEMCNFYLMYYVDHGETLNMKFCFSQGAPYYFWSNPDSGLHNIPHIEASTL</sequence>
<name>PHM_DROME</name>
<keyword id="KW-0186">Copper</keyword>
<keyword id="KW-1015">Disulfide bond</keyword>
<keyword id="KW-0325">Glycoprotein</keyword>
<keyword id="KW-0479">Metal-binding</keyword>
<keyword id="KW-0503">Monooxygenase</keyword>
<keyword id="KW-0560">Oxidoreductase</keyword>
<keyword id="KW-1185">Reference proteome</keyword>
<keyword id="KW-0964">Secreted</keyword>
<keyword id="KW-0732">Signal</keyword>
<protein>
    <recommendedName>
        <fullName>Peptidylglycine alpha-hydroxylating monooxygenase</fullName>
        <shortName>dPHM</shortName>
        <ecNumber>1.14.17.3</ecNumber>
    </recommendedName>
</protein>
<reference key="1">
    <citation type="journal article" date="1997" name="J. Neurosci.">
        <title>Neuropeptide amidation in Drosophila: separate genes encode the two enzymes catalyzing amidation.</title>
        <authorList>
            <person name="Kolhekar A.S."/>
            <person name="Roberts M.S."/>
            <person name="Jiang N."/>
            <person name="Johnson R.C."/>
            <person name="Mains R.E."/>
            <person name="Eipper B.A."/>
            <person name="Taghert P.H."/>
        </authorList>
    </citation>
    <scope>NUCLEOTIDE SEQUENCE [MRNA]</scope>
    <scope>NUCLEOTIDE SEQUENCE [GENOMIC DNA] OF 43-201 AND 291-324</scope>
    <scope>ENZYME ACTIVITY</scope>
    <scope>COFACTOR</scope>
    <scope>BIOPHYSICOCHEMICAL PROPERTIES</scope>
    <scope>TISSUE SPECIFICITY</scope>
</reference>
<reference key="2">
    <citation type="journal article" date="2000" name="Science">
        <title>The genome sequence of Drosophila melanogaster.</title>
        <authorList>
            <person name="Adams M.D."/>
            <person name="Celniker S.E."/>
            <person name="Holt R.A."/>
            <person name="Evans C.A."/>
            <person name="Gocayne J.D."/>
            <person name="Amanatides P.G."/>
            <person name="Scherer S.E."/>
            <person name="Li P.W."/>
            <person name="Hoskins R.A."/>
            <person name="Galle R.F."/>
            <person name="George R.A."/>
            <person name="Lewis S.E."/>
            <person name="Richards S."/>
            <person name="Ashburner M."/>
            <person name="Henderson S.N."/>
            <person name="Sutton G.G."/>
            <person name="Wortman J.R."/>
            <person name="Yandell M.D."/>
            <person name="Zhang Q."/>
            <person name="Chen L.X."/>
            <person name="Brandon R.C."/>
            <person name="Rogers Y.-H.C."/>
            <person name="Blazej R.G."/>
            <person name="Champe M."/>
            <person name="Pfeiffer B.D."/>
            <person name="Wan K.H."/>
            <person name="Doyle C."/>
            <person name="Baxter E.G."/>
            <person name="Helt G."/>
            <person name="Nelson C.R."/>
            <person name="Miklos G.L.G."/>
            <person name="Abril J.F."/>
            <person name="Agbayani A."/>
            <person name="An H.-J."/>
            <person name="Andrews-Pfannkoch C."/>
            <person name="Baldwin D."/>
            <person name="Ballew R.M."/>
            <person name="Basu A."/>
            <person name="Baxendale J."/>
            <person name="Bayraktaroglu L."/>
            <person name="Beasley E.M."/>
            <person name="Beeson K.Y."/>
            <person name="Benos P.V."/>
            <person name="Berman B.P."/>
            <person name="Bhandari D."/>
            <person name="Bolshakov S."/>
            <person name="Borkova D."/>
            <person name="Botchan M.R."/>
            <person name="Bouck J."/>
            <person name="Brokstein P."/>
            <person name="Brottier P."/>
            <person name="Burtis K.C."/>
            <person name="Busam D.A."/>
            <person name="Butler H."/>
            <person name="Cadieu E."/>
            <person name="Center A."/>
            <person name="Chandra I."/>
            <person name="Cherry J.M."/>
            <person name="Cawley S."/>
            <person name="Dahlke C."/>
            <person name="Davenport L.B."/>
            <person name="Davies P."/>
            <person name="de Pablos B."/>
            <person name="Delcher A."/>
            <person name="Deng Z."/>
            <person name="Mays A.D."/>
            <person name="Dew I."/>
            <person name="Dietz S.M."/>
            <person name="Dodson K."/>
            <person name="Doup L.E."/>
            <person name="Downes M."/>
            <person name="Dugan-Rocha S."/>
            <person name="Dunkov B.C."/>
            <person name="Dunn P."/>
            <person name="Durbin K.J."/>
            <person name="Evangelista C.C."/>
            <person name="Ferraz C."/>
            <person name="Ferriera S."/>
            <person name="Fleischmann W."/>
            <person name="Fosler C."/>
            <person name="Gabrielian A.E."/>
            <person name="Garg N.S."/>
            <person name="Gelbart W.M."/>
            <person name="Glasser K."/>
            <person name="Glodek A."/>
            <person name="Gong F."/>
            <person name="Gorrell J.H."/>
            <person name="Gu Z."/>
            <person name="Guan P."/>
            <person name="Harris M."/>
            <person name="Harris N.L."/>
            <person name="Harvey D.A."/>
            <person name="Heiman T.J."/>
            <person name="Hernandez J.R."/>
            <person name="Houck J."/>
            <person name="Hostin D."/>
            <person name="Houston K.A."/>
            <person name="Howland T.J."/>
            <person name="Wei M.-H."/>
            <person name="Ibegwam C."/>
            <person name="Jalali M."/>
            <person name="Kalush F."/>
            <person name="Karpen G.H."/>
            <person name="Ke Z."/>
            <person name="Kennison J.A."/>
            <person name="Ketchum K.A."/>
            <person name="Kimmel B.E."/>
            <person name="Kodira C.D."/>
            <person name="Kraft C.L."/>
            <person name="Kravitz S."/>
            <person name="Kulp D."/>
            <person name="Lai Z."/>
            <person name="Lasko P."/>
            <person name="Lei Y."/>
            <person name="Levitsky A.A."/>
            <person name="Li J.H."/>
            <person name="Li Z."/>
            <person name="Liang Y."/>
            <person name="Lin X."/>
            <person name="Liu X."/>
            <person name="Mattei B."/>
            <person name="McIntosh T.C."/>
            <person name="McLeod M.P."/>
            <person name="McPherson D."/>
            <person name="Merkulov G."/>
            <person name="Milshina N.V."/>
            <person name="Mobarry C."/>
            <person name="Morris J."/>
            <person name="Moshrefi A."/>
            <person name="Mount S.M."/>
            <person name="Moy M."/>
            <person name="Murphy B."/>
            <person name="Murphy L."/>
            <person name="Muzny D.M."/>
            <person name="Nelson D.L."/>
            <person name="Nelson D.R."/>
            <person name="Nelson K.A."/>
            <person name="Nixon K."/>
            <person name="Nusskern D.R."/>
            <person name="Pacleb J.M."/>
            <person name="Palazzolo M."/>
            <person name="Pittman G.S."/>
            <person name="Pan S."/>
            <person name="Pollard J."/>
            <person name="Puri V."/>
            <person name="Reese M.G."/>
            <person name="Reinert K."/>
            <person name="Remington K."/>
            <person name="Saunders R.D.C."/>
            <person name="Scheeler F."/>
            <person name="Shen H."/>
            <person name="Shue B.C."/>
            <person name="Siden-Kiamos I."/>
            <person name="Simpson M."/>
            <person name="Skupski M.P."/>
            <person name="Smith T.J."/>
            <person name="Spier E."/>
            <person name="Spradling A.C."/>
            <person name="Stapleton M."/>
            <person name="Strong R."/>
            <person name="Sun E."/>
            <person name="Svirskas R."/>
            <person name="Tector C."/>
            <person name="Turner R."/>
            <person name="Venter E."/>
            <person name="Wang A.H."/>
            <person name="Wang X."/>
            <person name="Wang Z.-Y."/>
            <person name="Wassarman D.A."/>
            <person name="Weinstock G.M."/>
            <person name="Weissenbach J."/>
            <person name="Williams S.M."/>
            <person name="Woodage T."/>
            <person name="Worley K.C."/>
            <person name="Wu D."/>
            <person name="Yang S."/>
            <person name="Yao Q.A."/>
            <person name="Ye J."/>
            <person name="Yeh R.-F."/>
            <person name="Zaveri J.S."/>
            <person name="Zhan M."/>
            <person name="Zhang G."/>
            <person name="Zhao Q."/>
            <person name="Zheng L."/>
            <person name="Zheng X.H."/>
            <person name="Zhong F.N."/>
            <person name="Zhong W."/>
            <person name="Zhou X."/>
            <person name="Zhu S.C."/>
            <person name="Zhu X."/>
            <person name="Smith H.O."/>
            <person name="Gibbs R.A."/>
            <person name="Myers E.W."/>
            <person name="Rubin G.M."/>
            <person name="Venter J.C."/>
        </authorList>
    </citation>
    <scope>NUCLEOTIDE SEQUENCE [LARGE SCALE GENOMIC DNA]</scope>
    <source>
        <strain>Berkeley</strain>
    </source>
</reference>
<reference key="3">
    <citation type="journal article" date="2002" name="Genome Biol.">
        <title>Annotation of the Drosophila melanogaster euchromatic genome: a systematic review.</title>
        <authorList>
            <person name="Misra S."/>
            <person name="Crosby M.A."/>
            <person name="Mungall C.J."/>
            <person name="Matthews B.B."/>
            <person name="Campbell K.S."/>
            <person name="Hradecky P."/>
            <person name="Huang Y."/>
            <person name="Kaminker J.S."/>
            <person name="Millburn G.H."/>
            <person name="Prochnik S.E."/>
            <person name="Smith C.D."/>
            <person name="Tupy J.L."/>
            <person name="Whitfield E.J."/>
            <person name="Bayraktaroglu L."/>
            <person name="Berman B.P."/>
            <person name="Bettencourt B.R."/>
            <person name="Celniker S.E."/>
            <person name="de Grey A.D.N.J."/>
            <person name="Drysdale R.A."/>
            <person name="Harris N.L."/>
            <person name="Richter J."/>
            <person name="Russo S."/>
            <person name="Schroeder A.J."/>
            <person name="Shu S.Q."/>
            <person name="Stapleton M."/>
            <person name="Yamada C."/>
            <person name="Ashburner M."/>
            <person name="Gelbart W.M."/>
            <person name="Rubin G.M."/>
            <person name="Lewis S.E."/>
        </authorList>
    </citation>
    <scope>GENOME REANNOTATION</scope>
    <source>
        <strain>Berkeley</strain>
    </source>
</reference>
<reference key="4">
    <citation type="journal article" date="2002" name="Genome Biol.">
        <title>A Drosophila full-length cDNA resource.</title>
        <authorList>
            <person name="Stapleton M."/>
            <person name="Carlson J.W."/>
            <person name="Brokstein P."/>
            <person name="Yu C."/>
            <person name="Champe M."/>
            <person name="George R.A."/>
            <person name="Guarin H."/>
            <person name="Kronmiller B."/>
            <person name="Pacleb J.M."/>
            <person name="Park S."/>
            <person name="Wan K.H."/>
            <person name="Rubin G.M."/>
            <person name="Celniker S.E."/>
        </authorList>
    </citation>
    <scope>NUCLEOTIDE SEQUENCE [LARGE SCALE MRNA]</scope>
    <source>
        <strain>Berkeley</strain>
        <tissue>Head</tissue>
    </source>
</reference>
<reference key="5">
    <citation type="journal article" date="2000" name="Dev. Biol.">
        <title>PHM is required for normal developmental transitions and for biosynthesis of secretory peptides in Drosophila.</title>
        <authorList>
            <person name="Jiang N."/>
            <person name="Kolhekar A.S."/>
            <person name="Jacobs P.S."/>
            <person name="Mains R.E."/>
            <person name="Eipper B.A."/>
            <person name="Taghert P.H."/>
        </authorList>
    </citation>
    <scope>FUNCTION</scope>
    <scope>DISRUPTION PHENOTYPE</scope>
</reference>
<reference key="6">
    <citation type="journal article" date="2001" name="J. Neurosci.">
        <title>Multiple amidated neuropeptides are required for normal circadian locomotor rhythms in Drosophila.</title>
        <authorList>
            <person name="Taghert P.H."/>
            <person name="Hewes R.S."/>
            <person name="Park J.H."/>
            <person name="O'Brien M.A."/>
            <person name="Han M."/>
            <person name="Peck M.E."/>
        </authorList>
    </citation>
    <scope>FUNCTION</scope>
</reference>
<reference key="7">
    <citation type="journal article" date="2006" name="J. Neurosci.">
        <title>Regulation of secretory protein expression in mature cells by DIMM, a basic helix-loop-helix neuroendocrine differentiation factor.</title>
        <authorList>
            <person name="Hewes R.S."/>
            <person name="Gu T."/>
            <person name="Brewster J.A."/>
            <person name="Qu C."/>
            <person name="Zhao T."/>
        </authorList>
    </citation>
    <scope>INDUCTION</scope>
</reference>
<comment type="function">
    <text evidence="3 4">Monooxygenase that catalyzes an essential reaction in C-terminal alpha-amidation of peptides. Produces an unstable peptidyl(2-hydroxyglycine) intermediate. C-terminal amidation of peptides is required for normal developmental transitions and for biosynthesis of secretory peptides throughout the life.</text>
</comment>
<comment type="catalytic activity">
    <reaction evidence="6">
        <text>a [peptide]-C-terminal glycine + 2 L-ascorbate + O2 = a [peptide]-C-terminal (2S)-2-hydroxyglycine + 2 monodehydro-L-ascorbate radical + H2O</text>
        <dbReference type="Rhea" id="RHEA:21452"/>
        <dbReference type="Rhea" id="RHEA-COMP:13486"/>
        <dbReference type="Rhea" id="RHEA-COMP:15321"/>
        <dbReference type="ChEBI" id="CHEBI:15377"/>
        <dbReference type="ChEBI" id="CHEBI:15379"/>
        <dbReference type="ChEBI" id="CHEBI:38290"/>
        <dbReference type="ChEBI" id="CHEBI:59513"/>
        <dbReference type="ChEBI" id="CHEBI:137000"/>
        <dbReference type="ChEBI" id="CHEBI:142768"/>
        <dbReference type="EC" id="1.14.17.3"/>
    </reaction>
</comment>
<comment type="cofactor">
    <cofactor evidence="8">
        <name>Cu(2+)</name>
        <dbReference type="ChEBI" id="CHEBI:29036"/>
    </cofactor>
    <text evidence="8">Binds 2 copper ions per subunit.</text>
</comment>
<comment type="biophysicochemical properties">
    <kinetics>
        <KM evidence="6">2.2 uM for alpha-N-acetyl-Tyr-Val-Gly</KM>
    </kinetics>
    <phDependence>
        <text evidence="6">Optimum pH is 5.0.</text>
    </phDependence>
</comment>
<comment type="subcellular location">
    <subcellularLocation>
        <location evidence="7">Secreted</location>
    </subcellularLocation>
</comment>
<comment type="tissue specificity">
    <text evidence="6">Expressed in the central nervous system (CNS) in a small number of CNS neurons (approximately a few hundred). Expression is present both in cell bodies and within neuropil regions. It is strongly expressed in neuroendocrine neurons (at protein level).</text>
</comment>
<comment type="induction">
    <text evidence="5">Transcriptionally regulated by DIMM.</text>
</comment>
<comment type="disruption phenotype">
    <text evidence="3">Death as late embryos with morphological defects that resemble those of animals with mutations in genes of the ecdysone-inducible regulatory circuit. Amidated peptides are largely absent but peptide precursors, a nonamidated neuropeptide, nonpeptide transmitters, and other peptide biosynthetic enzymes are detected.</text>
</comment>
<comment type="similarity">
    <text evidence="7">Belongs to the copper type II ascorbate-dependent monooxygenase family.</text>
</comment>